<reference key="1">
    <citation type="submission" date="2008-04" db="EMBL/GenBank/DDBJ databases">
        <title>Complete sequence of Yersinia pseudotuberculosis PB1/+.</title>
        <authorList>
            <person name="Copeland A."/>
            <person name="Lucas S."/>
            <person name="Lapidus A."/>
            <person name="Glavina del Rio T."/>
            <person name="Dalin E."/>
            <person name="Tice H."/>
            <person name="Bruce D."/>
            <person name="Goodwin L."/>
            <person name="Pitluck S."/>
            <person name="Munk A.C."/>
            <person name="Brettin T."/>
            <person name="Detter J.C."/>
            <person name="Han C."/>
            <person name="Tapia R."/>
            <person name="Schmutz J."/>
            <person name="Larimer F."/>
            <person name="Land M."/>
            <person name="Hauser L."/>
            <person name="Challacombe J.F."/>
            <person name="Green L."/>
            <person name="Lindler L.E."/>
            <person name="Nikolich M.P."/>
            <person name="Richardson P."/>
        </authorList>
    </citation>
    <scope>NUCLEOTIDE SEQUENCE [LARGE SCALE GENOMIC DNA]</scope>
    <source>
        <strain>PB1/+</strain>
    </source>
</reference>
<evidence type="ECO:0000255" key="1">
    <source>
        <dbReference type="HAMAP-Rule" id="MF_00750"/>
    </source>
</evidence>
<sequence length="567" mass="62450">MEYDYIIIGAGSAGNVLAARLTEDADVTVLLLEAGGPDYRLDFRTQMPAALAFPLQGKRYNWAYETDPEPHMNNRRMECGRGKGLGGSSLINGMCYIRGNAMDFDHWASLSGLEDWSYLDCLPYFRKAETRDVGPNDFHGGEGPVSVTTPKIDNNPLFHAMVAAGVQAGYPRTDDLNGYQQEGFGPMDRTVTPKGRRASTARGYLDQARPRNNLTIITHALTDRILFEGKRATGVSYLKGDAGTGQTAHARREVLLCGGAIASPQILQRSGIGPAELLQRLDIPLVQALPGVGENLQDHLEMYLQYSCKQPVSLYPALLWFNQPKIGIEWLFNGTGVGASNQFEAGGFIRSRDAFTWPNIQYHFLPVAINYNGSNAVKEHGFQAHVGSMRSPSRGRIQVKSKDPRQHPSILFNYMSNEQDWHEFRDAIRITREIIAQPALDPYRGREISPGANVQSDDELDAFIREHAETAYHPSCSCKMGDDKMAVVDGQGRVHGVQGLRVVDASIMPQIITGNLNATTIMIAEKIADRIRGCQPLAKSNAAYFIAGDTPARTSPVRHSLPVTSYP</sequence>
<feature type="chain" id="PRO_1000133341" description="Oxygen-dependent choline dehydrogenase">
    <location>
        <begin position="1"/>
        <end position="567"/>
    </location>
</feature>
<feature type="active site" description="Proton acceptor" evidence="1">
    <location>
        <position position="473"/>
    </location>
</feature>
<feature type="binding site" evidence="1">
    <location>
        <begin position="4"/>
        <end position="33"/>
    </location>
    <ligand>
        <name>FAD</name>
        <dbReference type="ChEBI" id="CHEBI:57692"/>
    </ligand>
</feature>
<protein>
    <recommendedName>
        <fullName evidence="1">Oxygen-dependent choline dehydrogenase</fullName>
        <shortName evidence="1">CDH</shortName>
        <shortName evidence="1">CHD</shortName>
        <ecNumber evidence="1">1.1.99.1</ecNumber>
    </recommendedName>
    <alternativeName>
        <fullName evidence="1">Betaine aldehyde dehydrogenase</fullName>
        <shortName evidence="1">BADH</shortName>
        <ecNumber evidence="1">1.2.1.8</ecNumber>
    </alternativeName>
</protein>
<keyword id="KW-0274">FAD</keyword>
<keyword id="KW-0285">Flavoprotein</keyword>
<keyword id="KW-0520">NAD</keyword>
<keyword id="KW-0560">Oxidoreductase</keyword>
<gene>
    <name evidence="1" type="primary">betA</name>
    <name type="ordered locus">YPTS_1275</name>
</gene>
<organism>
    <name type="scientific">Yersinia pseudotuberculosis serotype IB (strain PB1/+)</name>
    <dbReference type="NCBI Taxonomy" id="502801"/>
    <lineage>
        <taxon>Bacteria</taxon>
        <taxon>Pseudomonadati</taxon>
        <taxon>Pseudomonadota</taxon>
        <taxon>Gammaproteobacteria</taxon>
        <taxon>Enterobacterales</taxon>
        <taxon>Yersiniaceae</taxon>
        <taxon>Yersinia</taxon>
    </lineage>
</organism>
<proteinExistence type="inferred from homology"/>
<comment type="function">
    <text evidence="1">Involved in the biosynthesis of the osmoprotectant glycine betaine. Catalyzes the oxidation of choline to betaine aldehyde and betaine aldehyde to glycine betaine at the same rate.</text>
</comment>
<comment type="catalytic activity">
    <reaction evidence="1">
        <text>choline + A = betaine aldehyde + AH2</text>
        <dbReference type="Rhea" id="RHEA:17433"/>
        <dbReference type="ChEBI" id="CHEBI:13193"/>
        <dbReference type="ChEBI" id="CHEBI:15354"/>
        <dbReference type="ChEBI" id="CHEBI:15710"/>
        <dbReference type="ChEBI" id="CHEBI:17499"/>
        <dbReference type="EC" id="1.1.99.1"/>
    </reaction>
</comment>
<comment type="catalytic activity">
    <reaction evidence="1">
        <text>betaine aldehyde + NAD(+) + H2O = glycine betaine + NADH + 2 H(+)</text>
        <dbReference type="Rhea" id="RHEA:15305"/>
        <dbReference type="ChEBI" id="CHEBI:15377"/>
        <dbReference type="ChEBI" id="CHEBI:15378"/>
        <dbReference type="ChEBI" id="CHEBI:15710"/>
        <dbReference type="ChEBI" id="CHEBI:17750"/>
        <dbReference type="ChEBI" id="CHEBI:57540"/>
        <dbReference type="ChEBI" id="CHEBI:57945"/>
        <dbReference type="EC" id="1.2.1.8"/>
    </reaction>
</comment>
<comment type="cofactor">
    <cofactor evidence="1">
        <name>FAD</name>
        <dbReference type="ChEBI" id="CHEBI:57692"/>
    </cofactor>
</comment>
<comment type="pathway">
    <text evidence="1">Amine and polyamine biosynthesis; betaine biosynthesis via choline pathway; betaine aldehyde from choline (cytochrome c reductase route): step 1/1.</text>
</comment>
<comment type="similarity">
    <text evidence="1">Belongs to the GMC oxidoreductase family.</text>
</comment>
<name>BETA_YERPB</name>
<dbReference type="EC" id="1.1.99.1" evidence="1"/>
<dbReference type="EC" id="1.2.1.8" evidence="1"/>
<dbReference type="EMBL" id="CP001048">
    <property type="protein sequence ID" value="ACC88250.1"/>
    <property type="molecule type" value="Genomic_DNA"/>
</dbReference>
<dbReference type="RefSeq" id="WP_011191962.1">
    <property type="nucleotide sequence ID" value="NZ_CP009780.1"/>
</dbReference>
<dbReference type="SMR" id="B2K8U4"/>
<dbReference type="KEGG" id="ypb:YPTS_1275"/>
<dbReference type="PATRIC" id="fig|502801.10.peg.624"/>
<dbReference type="UniPathway" id="UPA00529">
    <property type="reaction ID" value="UER00385"/>
</dbReference>
<dbReference type="GO" id="GO:0016020">
    <property type="term" value="C:membrane"/>
    <property type="evidence" value="ECO:0007669"/>
    <property type="project" value="TreeGrafter"/>
</dbReference>
<dbReference type="GO" id="GO:0008802">
    <property type="term" value="F:betaine-aldehyde dehydrogenase (NAD+) activity"/>
    <property type="evidence" value="ECO:0007669"/>
    <property type="project" value="UniProtKB-EC"/>
</dbReference>
<dbReference type="GO" id="GO:0008812">
    <property type="term" value="F:choline dehydrogenase activity"/>
    <property type="evidence" value="ECO:0007669"/>
    <property type="project" value="UniProtKB-UniRule"/>
</dbReference>
<dbReference type="GO" id="GO:0050660">
    <property type="term" value="F:flavin adenine dinucleotide binding"/>
    <property type="evidence" value="ECO:0007669"/>
    <property type="project" value="InterPro"/>
</dbReference>
<dbReference type="GO" id="GO:0019285">
    <property type="term" value="P:glycine betaine biosynthetic process from choline"/>
    <property type="evidence" value="ECO:0007669"/>
    <property type="project" value="UniProtKB-UniRule"/>
</dbReference>
<dbReference type="Gene3D" id="3.50.50.60">
    <property type="entry name" value="FAD/NAD(P)-binding domain"/>
    <property type="match status" value="1"/>
</dbReference>
<dbReference type="Gene3D" id="3.30.560.10">
    <property type="entry name" value="Glucose Oxidase, domain 3"/>
    <property type="match status" value="1"/>
</dbReference>
<dbReference type="HAMAP" id="MF_00750">
    <property type="entry name" value="Choline_dehydrogen"/>
    <property type="match status" value="1"/>
</dbReference>
<dbReference type="InterPro" id="IPR011533">
    <property type="entry name" value="BetA"/>
</dbReference>
<dbReference type="InterPro" id="IPR036188">
    <property type="entry name" value="FAD/NAD-bd_sf"/>
</dbReference>
<dbReference type="InterPro" id="IPR012132">
    <property type="entry name" value="GMC_OxRdtase"/>
</dbReference>
<dbReference type="InterPro" id="IPR000172">
    <property type="entry name" value="GMC_OxRdtase_N"/>
</dbReference>
<dbReference type="InterPro" id="IPR007867">
    <property type="entry name" value="GMC_OxRtase_C"/>
</dbReference>
<dbReference type="NCBIfam" id="TIGR01810">
    <property type="entry name" value="betA"/>
    <property type="match status" value="1"/>
</dbReference>
<dbReference type="NCBIfam" id="NF002550">
    <property type="entry name" value="PRK02106.1"/>
    <property type="match status" value="1"/>
</dbReference>
<dbReference type="PANTHER" id="PTHR11552:SF147">
    <property type="entry name" value="CHOLINE DEHYDROGENASE, MITOCHONDRIAL"/>
    <property type="match status" value="1"/>
</dbReference>
<dbReference type="PANTHER" id="PTHR11552">
    <property type="entry name" value="GLUCOSE-METHANOL-CHOLINE GMC OXIDOREDUCTASE"/>
    <property type="match status" value="1"/>
</dbReference>
<dbReference type="Pfam" id="PF05199">
    <property type="entry name" value="GMC_oxred_C"/>
    <property type="match status" value="1"/>
</dbReference>
<dbReference type="Pfam" id="PF00732">
    <property type="entry name" value="GMC_oxred_N"/>
    <property type="match status" value="1"/>
</dbReference>
<dbReference type="PIRSF" id="PIRSF000137">
    <property type="entry name" value="Alcohol_oxidase"/>
    <property type="match status" value="1"/>
</dbReference>
<dbReference type="SUPFAM" id="SSF54373">
    <property type="entry name" value="FAD-linked reductases, C-terminal domain"/>
    <property type="match status" value="1"/>
</dbReference>
<dbReference type="SUPFAM" id="SSF51905">
    <property type="entry name" value="FAD/NAD(P)-binding domain"/>
    <property type="match status" value="1"/>
</dbReference>
<dbReference type="PROSITE" id="PS00623">
    <property type="entry name" value="GMC_OXRED_1"/>
    <property type="match status" value="1"/>
</dbReference>
<dbReference type="PROSITE" id="PS00624">
    <property type="entry name" value="GMC_OXRED_2"/>
    <property type="match status" value="1"/>
</dbReference>
<accession>B2K8U4</accession>